<comment type="function">
    <text evidence="1">Protein S19 forms a complex with S13 that binds strongly to the 16S ribosomal RNA.</text>
</comment>
<comment type="similarity">
    <text evidence="1">Belongs to the universal ribosomal protein uS19 family.</text>
</comment>
<name>RS19_SHEON</name>
<gene>
    <name evidence="1" type="primary">rpsS</name>
    <name type="ordered locus">SO_0235</name>
</gene>
<sequence>MPRSLKKGPFIDLHLLKKVEKAMEAGDKKPIKTWSRRSMIIPNMIGLTIAVHNGRQHVPVFVTDEMIGHKLGEFSPTRTYRGHAADKKAKKR</sequence>
<feature type="chain" id="PRO_0000129896" description="Small ribosomal subunit protein uS19">
    <location>
        <begin position="1"/>
        <end position="92"/>
    </location>
</feature>
<organism>
    <name type="scientific">Shewanella oneidensis (strain ATCC 700550 / JCM 31522 / CIP 106686 / LMG 19005 / NCIMB 14063 / MR-1)</name>
    <dbReference type="NCBI Taxonomy" id="211586"/>
    <lineage>
        <taxon>Bacteria</taxon>
        <taxon>Pseudomonadati</taxon>
        <taxon>Pseudomonadota</taxon>
        <taxon>Gammaproteobacteria</taxon>
        <taxon>Alteromonadales</taxon>
        <taxon>Shewanellaceae</taxon>
        <taxon>Shewanella</taxon>
    </lineage>
</organism>
<evidence type="ECO:0000255" key="1">
    <source>
        <dbReference type="HAMAP-Rule" id="MF_00531"/>
    </source>
</evidence>
<evidence type="ECO:0000305" key="2"/>
<reference key="1">
    <citation type="journal article" date="2002" name="Nat. Biotechnol.">
        <title>Genome sequence of the dissimilatory metal ion-reducing bacterium Shewanella oneidensis.</title>
        <authorList>
            <person name="Heidelberg J.F."/>
            <person name="Paulsen I.T."/>
            <person name="Nelson K.E."/>
            <person name="Gaidos E.J."/>
            <person name="Nelson W.C."/>
            <person name="Read T.D."/>
            <person name="Eisen J.A."/>
            <person name="Seshadri R."/>
            <person name="Ward N.L."/>
            <person name="Methe B.A."/>
            <person name="Clayton R.A."/>
            <person name="Meyer T."/>
            <person name="Tsapin A."/>
            <person name="Scott J."/>
            <person name="Beanan M.J."/>
            <person name="Brinkac L.M."/>
            <person name="Daugherty S.C."/>
            <person name="DeBoy R.T."/>
            <person name="Dodson R.J."/>
            <person name="Durkin A.S."/>
            <person name="Haft D.H."/>
            <person name="Kolonay J.F."/>
            <person name="Madupu R."/>
            <person name="Peterson J.D."/>
            <person name="Umayam L.A."/>
            <person name="White O."/>
            <person name="Wolf A.M."/>
            <person name="Vamathevan J.J."/>
            <person name="Weidman J.F."/>
            <person name="Impraim M."/>
            <person name="Lee K."/>
            <person name="Berry K.J."/>
            <person name="Lee C."/>
            <person name="Mueller J."/>
            <person name="Khouri H.M."/>
            <person name="Gill J."/>
            <person name="Utterback T.R."/>
            <person name="McDonald L.A."/>
            <person name="Feldblyum T.V."/>
            <person name="Smith H.O."/>
            <person name="Venter J.C."/>
            <person name="Nealson K.H."/>
            <person name="Fraser C.M."/>
        </authorList>
    </citation>
    <scope>NUCLEOTIDE SEQUENCE [LARGE SCALE GENOMIC DNA]</scope>
    <source>
        <strain>ATCC 700550 / JCM 31522 / CIP 106686 / LMG 19005 / NCIMB 14063 / MR-1</strain>
    </source>
</reference>
<proteinExistence type="inferred from homology"/>
<accession>Q8EK64</accession>
<dbReference type="EMBL" id="AE014299">
    <property type="protein sequence ID" value="AAN53320.1"/>
    <property type="molecule type" value="Genomic_DNA"/>
</dbReference>
<dbReference type="RefSeq" id="NP_715875.1">
    <property type="nucleotide sequence ID" value="NC_004347.2"/>
</dbReference>
<dbReference type="RefSeq" id="WP_006083596.1">
    <property type="nucleotide sequence ID" value="NZ_CP053946.1"/>
</dbReference>
<dbReference type="SMR" id="Q8EK64"/>
<dbReference type="STRING" id="211586.SO_0235"/>
<dbReference type="PaxDb" id="211586-SO_0235"/>
<dbReference type="GeneID" id="94726190"/>
<dbReference type="KEGG" id="son:SO_0235"/>
<dbReference type="PATRIC" id="fig|211586.12.peg.223"/>
<dbReference type="eggNOG" id="COG0185">
    <property type="taxonomic scope" value="Bacteria"/>
</dbReference>
<dbReference type="HOGENOM" id="CLU_144911_0_1_6"/>
<dbReference type="OrthoDB" id="9797833at2"/>
<dbReference type="PhylomeDB" id="Q8EK64"/>
<dbReference type="BioCyc" id="SONE211586:G1GMP-224-MONOMER"/>
<dbReference type="PRO" id="PR:Q8EK64"/>
<dbReference type="Proteomes" id="UP000008186">
    <property type="component" value="Chromosome"/>
</dbReference>
<dbReference type="GO" id="GO:0005737">
    <property type="term" value="C:cytoplasm"/>
    <property type="evidence" value="ECO:0007669"/>
    <property type="project" value="UniProtKB-ARBA"/>
</dbReference>
<dbReference type="GO" id="GO:0015935">
    <property type="term" value="C:small ribosomal subunit"/>
    <property type="evidence" value="ECO:0007669"/>
    <property type="project" value="InterPro"/>
</dbReference>
<dbReference type="GO" id="GO:0019843">
    <property type="term" value="F:rRNA binding"/>
    <property type="evidence" value="ECO:0007669"/>
    <property type="project" value="UniProtKB-UniRule"/>
</dbReference>
<dbReference type="GO" id="GO:0003735">
    <property type="term" value="F:structural constituent of ribosome"/>
    <property type="evidence" value="ECO:0000318"/>
    <property type="project" value="GO_Central"/>
</dbReference>
<dbReference type="GO" id="GO:0000028">
    <property type="term" value="P:ribosomal small subunit assembly"/>
    <property type="evidence" value="ECO:0000318"/>
    <property type="project" value="GO_Central"/>
</dbReference>
<dbReference type="GO" id="GO:0006412">
    <property type="term" value="P:translation"/>
    <property type="evidence" value="ECO:0007669"/>
    <property type="project" value="UniProtKB-UniRule"/>
</dbReference>
<dbReference type="FunFam" id="3.30.860.10:FF:000001">
    <property type="entry name" value="30S ribosomal protein S19"/>
    <property type="match status" value="1"/>
</dbReference>
<dbReference type="Gene3D" id="3.30.860.10">
    <property type="entry name" value="30s Ribosomal Protein S19, Chain A"/>
    <property type="match status" value="1"/>
</dbReference>
<dbReference type="HAMAP" id="MF_00531">
    <property type="entry name" value="Ribosomal_uS19"/>
    <property type="match status" value="1"/>
</dbReference>
<dbReference type="InterPro" id="IPR002222">
    <property type="entry name" value="Ribosomal_uS19"/>
</dbReference>
<dbReference type="InterPro" id="IPR005732">
    <property type="entry name" value="Ribosomal_uS19_bac-type"/>
</dbReference>
<dbReference type="InterPro" id="IPR020934">
    <property type="entry name" value="Ribosomal_uS19_CS"/>
</dbReference>
<dbReference type="InterPro" id="IPR023575">
    <property type="entry name" value="Ribosomal_uS19_SF"/>
</dbReference>
<dbReference type="NCBIfam" id="TIGR01050">
    <property type="entry name" value="rpsS_bact"/>
    <property type="match status" value="1"/>
</dbReference>
<dbReference type="PANTHER" id="PTHR11880">
    <property type="entry name" value="RIBOSOMAL PROTEIN S19P FAMILY MEMBER"/>
    <property type="match status" value="1"/>
</dbReference>
<dbReference type="PANTHER" id="PTHR11880:SF8">
    <property type="entry name" value="SMALL RIBOSOMAL SUBUNIT PROTEIN US19M"/>
    <property type="match status" value="1"/>
</dbReference>
<dbReference type="Pfam" id="PF00203">
    <property type="entry name" value="Ribosomal_S19"/>
    <property type="match status" value="1"/>
</dbReference>
<dbReference type="PIRSF" id="PIRSF002144">
    <property type="entry name" value="Ribosomal_S19"/>
    <property type="match status" value="1"/>
</dbReference>
<dbReference type="PRINTS" id="PR00975">
    <property type="entry name" value="RIBOSOMALS19"/>
</dbReference>
<dbReference type="SUPFAM" id="SSF54570">
    <property type="entry name" value="Ribosomal protein S19"/>
    <property type="match status" value="1"/>
</dbReference>
<dbReference type="PROSITE" id="PS00323">
    <property type="entry name" value="RIBOSOMAL_S19"/>
    <property type="match status" value="1"/>
</dbReference>
<keyword id="KW-1185">Reference proteome</keyword>
<keyword id="KW-0687">Ribonucleoprotein</keyword>
<keyword id="KW-0689">Ribosomal protein</keyword>
<keyword id="KW-0694">RNA-binding</keyword>
<keyword id="KW-0699">rRNA-binding</keyword>
<protein>
    <recommendedName>
        <fullName evidence="1">Small ribosomal subunit protein uS19</fullName>
    </recommendedName>
    <alternativeName>
        <fullName evidence="2">30S ribosomal protein S19</fullName>
    </alternativeName>
</protein>